<feature type="chain" id="PRO_1000014606" description="Small ribosomal subunit protein bS20">
    <location>
        <begin position="1"/>
        <end position="86"/>
    </location>
</feature>
<feature type="region of interest" description="Disordered" evidence="2">
    <location>
        <begin position="1"/>
        <end position="22"/>
    </location>
</feature>
<feature type="compositionally biased region" description="Basic residues" evidence="2">
    <location>
        <begin position="7"/>
        <end position="20"/>
    </location>
</feature>
<feature type="helix" evidence="4">
    <location>
        <begin position="7"/>
        <end position="40"/>
    </location>
</feature>
<feature type="helix" evidence="4">
    <location>
        <begin position="44"/>
        <end position="63"/>
    </location>
</feature>
<feature type="helix" evidence="4">
    <location>
        <begin position="69"/>
        <end position="84"/>
    </location>
</feature>
<organism>
    <name type="scientific">Mycolicibacterium smegmatis (strain ATCC 700084 / mc(2)155)</name>
    <name type="common">Mycobacterium smegmatis</name>
    <dbReference type="NCBI Taxonomy" id="246196"/>
    <lineage>
        <taxon>Bacteria</taxon>
        <taxon>Bacillati</taxon>
        <taxon>Actinomycetota</taxon>
        <taxon>Actinomycetes</taxon>
        <taxon>Mycobacteriales</taxon>
        <taxon>Mycobacteriaceae</taxon>
        <taxon>Mycolicibacterium</taxon>
    </lineage>
</organism>
<reference key="1">
    <citation type="submission" date="2006-10" db="EMBL/GenBank/DDBJ databases">
        <authorList>
            <person name="Fleischmann R.D."/>
            <person name="Dodson R.J."/>
            <person name="Haft D.H."/>
            <person name="Merkel J.S."/>
            <person name="Nelson W.C."/>
            <person name="Fraser C.M."/>
        </authorList>
    </citation>
    <scope>NUCLEOTIDE SEQUENCE [LARGE SCALE GENOMIC DNA]</scope>
    <source>
        <strain>ATCC 700084 / mc(2)155</strain>
    </source>
</reference>
<reference key="2">
    <citation type="journal article" date="2007" name="Genome Biol.">
        <title>Interrupted coding sequences in Mycobacterium smegmatis: authentic mutations or sequencing errors?</title>
        <authorList>
            <person name="Deshayes C."/>
            <person name="Perrodou E."/>
            <person name="Gallien S."/>
            <person name="Euphrasie D."/>
            <person name="Schaeffer C."/>
            <person name="Van-Dorsselaer A."/>
            <person name="Poch O."/>
            <person name="Lecompte O."/>
            <person name="Reyrat J.-M."/>
        </authorList>
    </citation>
    <scope>NUCLEOTIDE SEQUENCE [LARGE SCALE GENOMIC DNA]</scope>
    <source>
        <strain>ATCC 700084 / mc(2)155</strain>
    </source>
</reference>
<reference key="3">
    <citation type="journal article" date="2009" name="Genome Res.">
        <title>Ortho-proteogenomics: multiple proteomes investigation through orthology and a new MS-based protocol.</title>
        <authorList>
            <person name="Gallien S."/>
            <person name="Perrodou E."/>
            <person name="Carapito C."/>
            <person name="Deshayes C."/>
            <person name="Reyrat J.-M."/>
            <person name="Van Dorsselaer A."/>
            <person name="Poch O."/>
            <person name="Schaeffer C."/>
            <person name="Lecompte O."/>
        </authorList>
    </citation>
    <scope>NUCLEOTIDE SEQUENCE [LARGE SCALE GENOMIC DNA]</scope>
    <scope>IDENTIFICATION BY MASS SPECTROMETRY [LARGE SCALE ANALYSIS]</scope>
    <scope>IDENTIFICATION OF N-TERMINUS</scope>
    <source>
        <strain>ATCC 700084 / mc(2)155</strain>
    </source>
</reference>
<sequence>MANIKSQIKRIRTNERRRLRNQSVKSSLRTAIRGFREAVDAGDKDKASELLHATSRKLDKAASKGVIHPNQAANKKSALALALNKL</sequence>
<evidence type="ECO:0000255" key="1">
    <source>
        <dbReference type="HAMAP-Rule" id="MF_00500"/>
    </source>
</evidence>
<evidence type="ECO:0000256" key="2">
    <source>
        <dbReference type="SAM" id="MobiDB-lite"/>
    </source>
</evidence>
<evidence type="ECO:0000305" key="3"/>
<evidence type="ECO:0007829" key="4">
    <source>
        <dbReference type="PDB" id="5XYU"/>
    </source>
</evidence>
<comment type="function">
    <text evidence="1">Binds directly to 16S ribosomal RNA.</text>
</comment>
<comment type="similarity">
    <text evidence="1">Belongs to the bacterial ribosomal protein bS20 family.</text>
</comment>
<protein>
    <recommendedName>
        <fullName evidence="1">Small ribosomal subunit protein bS20</fullName>
    </recommendedName>
    <alternativeName>
        <fullName evidence="3">30S ribosomal protein S20</fullName>
    </alternativeName>
</protein>
<gene>
    <name evidence="1" type="primary">rpsT</name>
    <name type="ordered locus">MSMEG_4571</name>
    <name type="ordered locus">MSMEI_4459</name>
</gene>
<dbReference type="EMBL" id="CP000480">
    <property type="protein sequence ID" value="ABK69738.1"/>
    <property type="molecule type" value="Genomic_DNA"/>
</dbReference>
<dbReference type="EMBL" id="CP001663">
    <property type="protein sequence ID" value="AFP40913.1"/>
    <property type="molecule type" value="Genomic_DNA"/>
</dbReference>
<dbReference type="RefSeq" id="WP_003895949.1">
    <property type="nucleotide sequence ID" value="NZ_SIJM01000004.1"/>
</dbReference>
<dbReference type="RefSeq" id="YP_888840.1">
    <property type="nucleotide sequence ID" value="NC_008596.1"/>
</dbReference>
<dbReference type="PDB" id="5O5J">
    <property type="method" value="EM"/>
    <property type="resolution" value="3.45 A"/>
    <property type="chains" value="T=1-86"/>
</dbReference>
<dbReference type="PDB" id="5O61">
    <property type="method" value="EM"/>
    <property type="resolution" value="3.31 A"/>
    <property type="chains" value="BT=1-86"/>
</dbReference>
<dbReference type="PDB" id="5XYU">
    <property type="method" value="EM"/>
    <property type="resolution" value="3.45 A"/>
    <property type="chains" value="T=1-86"/>
</dbReference>
<dbReference type="PDB" id="5ZEB">
    <property type="method" value="EM"/>
    <property type="resolution" value="3.40 A"/>
    <property type="chains" value="t=1-86"/>
</dbReference>
<dbReference type="PDB" id="5ZEP">
    <property type="method" value="EM"/>
    <property type="resolution" value="3.40 A"/>
    <property type="chains" value="t=1-86"/>
</dbReference>
<dbReference type="PDB" id="5ZEU">
    <property type="method" value="EM"/>
    <property type="resolution" value="3.70 A"/>
    <property type="chains" value="t=1-86"/>
</dbReference>
<dbReference type="PDB" id="6DZI">
    <property type="method" value="EM"/>
    <property type="resolution" value="3.46 A"/>
    <property type="chains" value="7=2-86"/>
</dbReference>
<dbReference type="PDB" id="6DZK">
    <property type="method" value="EM"/>
    <property type="resolution" value="3.60 A"/>
    <property type="chains" value="T=1-86"/>
</dbReference>
<dbReference type="PDB" id="8FR8">
    <property type="method" value="EM"/>
    <property type="resolution" value="2.76 A"/>
    <property type="chains" value="t=2-86"/>
</dbReference>
<dbReference type="PDB" id="8V9J">
    <property type="method" value="EM"/>
    <property type="resolution" value="3.10 A"/>
    <property type="chains" value="t=1-86"/>
</dbReference>
<dbReference type="PDB" id="8V9K">
    <property type="method" value="EM"/>
    <property type="resolution" value="3.10 A"/>
    <property type="chains" value="t=1-86"/>
</dbReference>
<dbReference type="PDB" id="8V9L">
    <property type="method" value="EM"/>
    <property type="resolution" value="3.00 A"/>
    <property type="chains" value="t=1-86"/>
</dbReference>
<dbReference type="PDB" id="8VIO">
    <property type="method" value="EM"/>
    <property type="resolution" value="3.26 A"/>
    <property type="chains" value="z=1-86"/>
</dbReference>
<dbReference type="PDB" id="8WHX">
    <property type="method" value="EM"/>
    <property type="resolution" value="2.80 A"/>
    <property type="chains" value="u=1-86"/>
</dbReference>
<dbReference type="PDB" id="8WI7">
    <property type="method" value="EM"/>
    <property type="resolution" value="3.50 A"/>
    <property type="chains" value="u=1-86"/>
</dbReference>
<dbReference type="PDB" id="8WI9">
    <property type="method" value="EM"/>
    <property type="resolution" value="3.50 A"/>
    <property type="chains" value="u=1-86"/>
</dbReference>
<dbReference type="PDB" id="8WIB">
    <property type="method" value="EM"/>
    <property type="resolution" value="3.50 A"/>
    <property type="chains" value="u=1-86"/>
</dbReference>
<dbReference type="PDB" id="8WID">
    <property type="method" value="EM"/>
    <property type="resolution" value="3.50 A"/>
    <property type="chains" value="u=1-86"/>
</dbReference>
<dbReference type="PDB" id="8WIF">
    <property type="method" value="EM"/>
    <property type="resolution" value="2.90 A"/>
    <property type="chains" value="u=1-86"/>
</dbReference>
<dbReference type="PDBsum" id="5O5J"/>
<dbReference type="PDBsum" id="5O61"/>
<dbReference type="PDBsum" id="5XYU"/>
<dbReference type="PDBsum" id="5ZEB"/>
<dbReference type="PDBsum" id="5ZEP"/>
<dbReference type="PDBsum" id="5ZEU"/>
<dbReference type="PDBsum" id="6DZI"/>
<dbReference type="PDBsum" id="6DZK"/>
<dbReference type="PDBsum" id="8FR8"/>
<dbReference type="PDBsum" id="8V9J"/>
<dbReference type="PDBsum" id="8V9K"/>
<dbReference type="PDBsum" id="8V9L"/>
<dbReference type="PDBsum" id="8VIO"/>
<dbReference type="PDBsum" id="8WHX"/>
<dbReference type="PDBsum" id="8WI7"/>
<dbReference type="PDBsum" id="8WI9"/>
<dbReference type="PDBsum" id="8WIB"/>
<dbReference type="PDBsum" id="8WID"/>
<dbReference type="PDBsum" id="8WIF"/>
<dbReference type="EMDB" id="EMD-29397"/>
<dbReference type="EMDB" id="EMD-3748"/>
<dbReference type="EMDB" id="EMD-3751"/>
<dbReference type="EMDB" id="EMD-37551"/>
<dbReference type="EMDB" id="EMD-37559"/>
<dbReference type="EMDB" id="EMD-37561"/>
<dbReference type="EMDB" id="EMD-37562"/>
<dbReference type="EMDB" id="EMD-37564"/>
<dbReference type="EMDB" id="EMD-37565"/>
<dbReference type="EMDB" id="EMD-43074"/>
<dbReference type="EMDB" id="EMD-43075"/>
<dbReference type="EMDB" id="EMD-43076"/>
<dbReference type="EMDB" id="EMD-43267"/>
<dbReference type="EMDB" id="EMD-6790"/>
<dbReference type="EMDB" id="EMD-6920"/>
<dbReference type="EMDB" id="EMD-6921"/>
<dbReference type="EMDB" id="EMD-6923"/>
<dbReference type="EMDB" id="EMD-8932"/>
<dbReference type="EMDB" id="EMD-8934"/>
<dbReference type="SMR" id="A0R102"/>
<dbReference type="IntAct" id="A0R102">
    <property type="interactions" value="1"/>
</dbReference>
<dbReference type="STRING" id="246196.MSMEG_4571"/>
<dbReference type="PaxDb" id="246196-MSMEI_4459"/>
<dbReference type="GeneID" id="93459267"/>
<dbReference type="KEGG" id="msb:LJ00_22620"/>
<dbReference type="KEGG" id="msg:MSMEI_4459"/>
<dbReference type="KEGG" id="msm:MSMEG_4571"/>
<dbReference type="PATRIC" id="fig|246196.19.peg.4474"/>
<dbReference type="eggNOG" id="COG0268">
    <property type="taxonomic scope" value="Bacteria"/>
</dbReference>
<dbReference type="OrthoDB" id="9807974at2"/>
<dbReference type="Proteomes" id="UP000000757">
    <property type="component" value="Chromosome"/>
</dbReference>
<dbReference type="Proteomes" id="UP000006158">
    <property type="component" value="Chromosome"/>
</dbReference>
<dbReference type="GO" id="GO:0005829">
    <property type="term" value="C:cytosol"/>
    <property type="evidence" value="ECO:0007669"/>
    <property type="project" value="TreeGrafter"/>
</dbReference>
<dbReference type="GO" id="GO:0015935">
    <property type="term" value="C:small ribosomal subunit"/>
    <property type="evidence" value="ECO:0007669"/>
    <property type="project" value="TreeGrafter"/>
</dbReference>
<dbReference type="GO" id="GO:0070181">
    <property type="term" value="F:small ribosomal subunit rRNA binding"/>
    <property type="evidence" value="ECO:0007669"/>
    <property type="project" value="TreeGrafter"/>
</dbReference>
<dbReference type="GO" id="GO:0003735">
    <property type="term" value="F:structural constituent of ribosome"/>
    <property type="evidence" value="ECO:0007669"/>
    <property type="project" value="InterPro"/>
</dbReference>
<dbReference type="GO" id="GO:0006412">
    <property type="term" value="P:translation"/>
    <property type="evidence" value="ECO:0007669"/>
    <property type="project" value="UniProtKB-UniRule"/>
</dbReference>
<dbReference type="FunFam" id="1.20.58.110:FF:000001">
    <property type="entry name" value="30S ribosomal protein S20"/>
    <property type="match status" value="1"/>
</dbReference>
<dbReference type="Gene3D" id="1.20.58.110">
    <property type="entry name" value="Ribosomal protein S20"/>
    <property type="match status" value="1"/>
</dbReference>
<dbReference type="HAMAP" id="MF_00500">
    <property type="entry name" value="Ribosomal_bS20"/>
    <property type="match status" value="1"/>
</dbReference>
<dbReference type="InterPro" id="IPR002583">
    <property type="entry name" value="Ribosomal_bS20"/>
</dbReference>
<dbReference type="InterPro" id="IPR036510">
    <property type="entry name" value="Ribosomal_bS20_sf"/>
</dbReference>
<dbReference type="NCBIfam" id="TIGR00029">
    <property type="entry name" value="S20"/>
    <property type="match status" value="1"/>
</dbReference>
<dbReference type="PANTHER" id="PTHR33398">
    <property type="entry name" value="30S RIBOSOMAL PROTEIN S20"/>
    <property type="match status" value="1"/>
</dbReference>
<dbReference type="PANTHER" id="PTHR33398:SF1">
    <property type="entry name" value="SMALL RIBOSOMAL SUBUNIT PROTEIN BS20C"/>
    <property type="match status" value="1"/>
</dbReference>
<dbReference type="Pfam" id="PF01649">
    <property type="entry name" value="Ribosomal_S20p"/>
    <property type="match status" value="1"/>
</dbReference>
<dbReference type="SUPFAM" id="SSF46992">
    <property type="entry name" value="Ribosomal protein S20"/>
    <property type="match status" value="1"/>
</dbReference>
<accession>A0R102</accession>
<accession>I7FQD2</accession>
<proteinExistence type="evidence at protein level"/>
<keyword id="KW-0002">3D-structure</keyword>
<keyword id="KW-1185">Reference proteome</keyword>
<keyword id="KW-0687">Ribonucleoprotein</keyword>
<keyword id="KW-0689">Ribosomal protein</keyword>
<keyword id="KW-0694">RNA-binding</keyword>
<keyword id="KW-0699">rRNA-binding</keyword>
<name>RS20_MYCS2</name>